<proteinExistence type="inferred from homology"/>
<organismHost>
    <name type="scientific">Acanthamoeba polyphaga</name>
    <name type="common">Amoeba</name>
    <dbReference type="NCBI Taxonomy" id="5757"/>
</organismHost>
<name>TBPL_MIMIV</name>
<evidence type="ECO:0000256" key="1">
    <source>
        <dbReference type="SAM" id="MobiDB-lite"/>
    </source>
</evidence>
<evidence type="ECO:0000305" key="2"/>
<protein>
    <recommendedName>
        <fullName>TATA-box-binding protein-like</fullName>
    </recommendedName>
    <alternativeName>
        <fullName>TATA-binding factor-like</fullName>
    </alternativeName>
    <alternativeName>
        <fullName>TATA-box factor-like</fullName>
    </alternativeName>
    <alternativeName>
        <fullName>TBP-like</fullName>
    </alternativeName>
</protein>
<gene>
    <name type="ordered locus">MIMI_R453</name>
</gene>
<sequence>MKKQSKTHKVDYKYYNSGSKTSRNRNVQQLETNNKIPQSDVVGPVVKISKEVTNETDIISPNNPIINQNQEIFDTYQKSYIEAKKFLNDHNIKISTITLDCKLGTLIDVDLFAKNVILKEDQIVSVKFGNRNDPATNRTIVVLKTKKKPSTKNFYNQVTILMKPTNNPERNYINIKVFKNGSLQMTGCKDMEDFNNVTVKLIEILKNGRRSKKDNKHIKFITDPNKIGIYDVKIRMINSDFKLDYKVDRKKLAKILKKYHGQNTKDKEIGYVECKYQPTGGHSCVNIKYNNDGNKTSIFVFQTGSIIITGAKNLNHIISAYFFIHKVLSRYYKKIKILPLQQNLVQLEIAKYFQKVNQKTYPVEIQE</sequence>
<feature type="chain" id="PRO_0000153991" description="TATA-box-binding protein-like">
    <location>
        <begin position="1"/>
        <end position="367"/>
    </location>
</feature>
<feature type="region of interest" description="Disordered" evidence="1">
    <location>
        <begin position="1"/>
        <end position="26"/>
    </location>
</feature>
<feature type="compositionally biased region" description="Polar residues" evidence="1">
    <location>
        <begin position="16"/>
        <end position="26"/>
    </location>
</feature>
<comment type="similarity">
    <text evidence="2">Belongs to the TBP family.</text>
</comment>
<dbReference type="EMBL" id="AY653733">
    <property type="protein sequence ID" value="AAV50719.1"/>
    <property type="molecule type" value="Genomic_DNA"/>
</dbReference>
<dbReference type="SMR" id="Q5UQP9"/>
<dbReference type="KEGG" id="vg:9925078"/>
<dbReference type="OrthoDB" id="27924at10239"/>
<dbReference type="Proteomes" id="UP000001134">
    <property type="component" value="Genome"/>
</dbReference>
<dbReference type="GO" id="GO:0003677">
    <property type="term" value="F:DNA binding"/>
    <property type="evidence" value="ECO:0007669"/>
    <property type="project" value="UniProtKB-KW"/>
</dbReference>
<dbReference type="Gene3D" id="3.30.310.10">
    <property type="entry name" value="TATA-Binding Protein"/>
    <property type="match status" value="1"/>
</dbReference>
<dbReference type="InterPro" id="IPR012295">
    <property type="entry name" value="TBP_dom_sf"/>
</dbReference>
<dbReference type="SUPFAM" id="SSF55945">
    <property type="entry name" value="TATA-box binding protein-like"/>
    <property type="match status" value="2"/>
</dbReference>
<organism>
    <name type="scientific">Acanthamoeba polyphaga mimivirus</name>
    <name type="common">APMV</name>
    <dbReference type="NCBI Taxonomy" id="212035"/>
    <lineage>
        <taxon>Viruses</taxon>
        <taxon>Varidnaviria</taxon>
        <taxon>Bamfordvirae</taxon>
        <taxon>Nucleocytoviricota</taxon>
        <taxon>Megaviricetes</taxon>
        <taxon>Imitervirales</taxon>
        <taxon>Mimiviridae</taxon>
        <taxon>Megamimivirinae</taxon>
        <taxon>Mimivirus</taxon>
        <taxon>Mimivirus bradfordmassiliense</taxon>
    </lineage>
</organism>
<keyword id="KW-0238">DNA-binding</keyword>
<keyword id="KW-1185">Reference proteome</keyword>
<reference key="1">
    <citation type="journal article" date="2004" name="Science">
        <title>The 1.2-megabase genome sequence of Mimivirus.</title>
        <authorList>
            <person name="Raoult D."/>
            <person name="Audic S."/>
            <person name="Robert C."/>
            <person name="Abergel C."/>
            <person name="Renesto P."/>
            <person name="Ogata H."/>
            <person name="La Scola B."/>
            <person name="Susan M."/>
            <person name="Claverie J.-M."/>
        </authorList>
    </citation>
    <scope>NUCLEOTIDE SEQUENCE [LARGE SCALE GENOMIC DNA]</scope>
    <source>
        <strain>Rowbotham-Bradford</strain>
    </source>
</reference>
<accession>Q5UQP9</accession>